<evidence type="ECO:0000255" key="1">
    <source>
        <dbReference type="HAMAP-Rule" id="MF_01382"/>
    </source>
</evidence>
<evidence type="ECO:0000256" key="2">
    <source>
        <dbReference type="SAM" id="MobiDB-lite"/>
    </source>
</evidence>
<protein>
    <recommendedName>
        <fullName evidence="1">Protein translocase subunit SecA</fullName>
        <ecNumber evidence="1">7.4.2.8</ecNumber>
    </recommendedName>
</protein>
<proteinExistence type="inferred from homology"/>
<feature type="chain" id="PRO_1000087333" description="Protein translocase subunit SecA">
    <location>
        <begin position="1"/>
        <end position="1011"/>
    </location>
</feature>
<feature type="region of interest" description="Disordered" evidence="2">
    <location>
        <begin position="969"/>
        <end position="1011"/>
    </location>
</feature>
<feature type="binding site" evidence="1">
    <location>
        <position position="87"/>
    </location>
    <ligand>
        <name>ATP</name>
        <dbReference type="ChEBI" id="CHEBI:30616"/>
    </ligand>
</feature>
<feature type="binding site" evidence="1">
    <location>
        <begin position="105"/>
        <end position="109"/>
    </location>
    <ligand>
        <name>ATP</name>
        <dbReference type="ChEBI" id="CHEBI:30616"/>
    </ligand>
</feature>
<feature type="binding site" evidence="1">
    <location>
        <position position="500"/>
    </location>
    <ligand>
        <name>ATP</name>
        <dbReference type="ChEBI" id="CHEBI:30616"/>
    </ligand>
</feature>
<feature type="binding site" evidence="1">
    <location>
        <position position="991"/>
    </location>
    <ligand>
        <name>Zn(2+)</name>
        <dbReference type="ChEBI" id="CHEBI:29105"/>
    </ligand>
</feature>
<feature type="binding site" evidence="1">
    <location>
        <position position="993"/>
    </location>
    <ligand>
        <name>Zn(2+)</name>
        <dbReference type="ChEBI" id="CHEBI:29105"/>
    </ligand>
</feature>
<feature type="binding site" evidence="1">
    <location>
        <position position="1002"/>
    </location>
    <ligand>
        <name>Zn(2+)</name>
        <dbReference type="ChEBI" id="CHEBI:29105"/>
    </ligand>
</feature>
<feature type="binding site" evidence="1">
    <location>
        <position position="1003"/>
    </location>
    <ligand>
        <name>Zn(2+)</name>
        <dbReference type="ChEBI" id="CHEBI:29105"/>
    </ligand>
</feature>
<comment type="function">
    <text evidence="1">Part of the Sec protein translocase complex. Interacts with the SecYEG preprotein conducting channel. Has a central role in coupling the hydrolysis of ATP to the transfer of proteins into and across the cell membrane, serving as an ATP-driven molecular motor driving the stepwise translocation of polypeptide chains across the membrane.</text>
</comment>
<comment type="catalytic activity">
    <reaction evidence="1">
        <text>ATP + H2O + cellular proteinSide 1 = ADP + phosphate + cellular proteinSide 2.</text>
        <dbReference type="EC" id="7.4.2.8"/>
    </reaction>
</comment>
<comment type="cofactor">
    <cofactor evidence="1">
        <name>Zn(2+)</name>
        <dbReference type="ChEBI" id="CHEBI:29105"/>
    </cofactor>
    <text evidence="1">May bind 1 zinc ion per subunit.</text>
</comment>
<comment type="subunit">
    <text evidence="1">Monomer and homodimer. Part of the essential Sec protein translocation apparatus which comprises SecA, SecYEG and auxiliary proteins SecDF-YajC and YidC.</text>
</comment>
<comment type="subcellular location">
    <subcellularLocation>
        <location evidence="1">Cell inner membrane</location>
        <topology evidence="1">Peripheral membrane protein</topology>
        <orientation evidence="1">Cytoplasmic side</orientation>
    </subcellularLocation>
    <subcellularLocation>
        <location evidence="1">Cytoplasm</location>
    </subcellularLocation>
    <text evidence="1">Distribution is 50-50.</text>
</comment>
<comment type="similarity">
    <text evidence="1">Belongs to the SecA family.</text>
</comment>
<organism>
    <name type="scientific">Sorangium cellulosum (strain So ce56)</name>
    <name type="common">Polyangium cellulosum (strain So ce56)</name>
    <dbReference type="NCBI Taxonomy" id="448385"/>
    <lineage>
        <taxon>Bacteria</taxon>
        <taxon>Pseudomonadati</taxon>
        <taxon>Myxococcota</taxon>
        <taxon>Polyangia</taxon>
        <taxon>Polyangiales</taxon>
        <taxon>Polyangiaceae</taxon>
        <taxon>Sorangium</taxon>
    </lineage>
</organism>
<accession>A9GI17</accession>
<gene>
    <name evidence="1" type="primary">secA</name>
    <name type="ordered locus">sce0030</name>
</gene>
<sequence length="1011" mass="115053">MFTWAMKKIFGTSHERAIRRMRPRVEAIGRMEPELQKLSDAQLRAKTAEFKEKLANGATLDDILVPAFAVCREASKRALKMRHYDVQLIGGMVLHNGCIAEMRTGEGKTLVATLPCYLNALEGKGVHVVTVNDYLARRDAEWMGKLYGFLGLSTGVVVNQQGDAEKRHAYRCDITYGQNNEFGFDYLRDNMKFSALEYAQRPLHYAIVDEVDSILIDEARTPLIISGQGERSSDKYRTINEVIPQLRNEEHYALDEKAHSVTLTDEGVETAERLLASLQVLKGTNLYDPVNLETLHILNQCLRAHTLYKRDVNYMVRDGKVLIIDEFTGRVLAGRRWSDGLHQAVEAKENVRIQEESRTMATITFQNLFRLYKKLSGMTGTADTEAAEFHSTYKLDCVIIPTNKPVVRKDYEDLVYKTEKEKFTAVINEILEKHELGQPILVGTTSVEKSTAISRILAKRGVKHNVLNAKHHENEAYVVAQAGRKGAITVSTNMAGRGTDIILGGNAEMLAKLKFKEQNRQPEAEPEAFEALVEEIKKECTAEGDEIREIGGLYILGTERHESRRIDNQLRGRAGRQGDPGTSKFYLSLEDDLMRIFAGDRVKNLMERMGMPDDEPIEHPWVTKSVENAQKKVEERNFDIRKNLLEYDDVMSAQRKTIYDMRQSLLVGRYSPEILDEEGKPTGEKRTIKPLASIVELVRPDVGYLLGMFANDPVMPLDADGNRREIVRKDFEKTERFVELENMQREIYTRWGVKIELETRADKVLEIYDECSELMPLALTEQRERLLDLMDRIIGAMVEESCPARKPPEDWDWGGIFQGFREHFSVELPDDIAHIGDQETLARELYERAEKAYEKREEEIGVELSLRIFRHLYLEELDKAWVDHLTDMDHLRDGIGLRGYGQKDPKQEYKKEGYNMFVNMVARVSSNVVTKLFSVNVRRAEQEEAQIEAADRERHAAALLDAVAQHDESLPLGANPAPARPQPAVMQEQECPCGSGKPFNKCHGGEDEATA</sequence>
<dbReference type="EC" id="7.4.2.8" evidence="1"/>
<dbReference type="EMBL" id="AM746676">
    <property type="protein sequence ID" value="CAN90186.1"/>
    <property type="molecule type" value="Genomic_DNA"/>
</dbReference>
<dbReference type="SMR" id="A9GI17"/>
<dbReference type="STRING" id="448385.sce0030"/>
<dbReference type="KEGG" id="scl:sce0030"/>
<dbReference type="eggNOG" id="COG0653">
    <property type="taxonomic scope" value="Bacteria"/>
</dbReference>
<dbReference type="HOGENOM" id="CLU_005314_3_0_7"/>
<dbReference type="OrthoDB" id="9805579at2"/>
<dbReference type="BioCyc" id="SCEL448385:SCE_RS00150-MONOMER"/>
<dbReference type="Proteomes" id="UP000002139">
    <property type="component" value="Chromosome"/>
</dbReference>
<dbReference type="GO" id="GO:0031522">
    <property type="term" value="C:cell envelope Sec protein transport complex"/>
    <property type="evidence" value="ECO:0007669"/>
    <property type="project" value="TreeGrafter"/>
</dbReference>
<dbReference type="GO" id="GO:0005829">
    <property type="term" value="C:cytosol"/>
    <property type="evidence" value="ECO:0007669"/>
    <property type="project" value="TreeGrafter"/>
</dbReference>
<dbReference type="GO" id="GO:0005886">
    <property type="term" value="C:plasma membrane"/>
    <property type="evidence" value="ECO:0007669"/>
    <property type="project" value="UniProtKB-SubCell"/>
</dbReference>
<dbReference type="GO" id="GO:0005524">
    <property type="term" value="F:ATP binding"/>
    <property type="evidence" value="ECO:0007669"/>
    <property type="project" value="UniProtKB-UniRule"/>
</dbReference>
<dbReference type="GO" id="GO:0046872">
    <property type="term" value="F:metal ion binding"/>
    <property type="evidence" value="ECO:0007669"/>
    <property type="project" value="UniProtKB-KW"/>
</dbReference>
<dbReference type="GO" id="GO:0008564">
    <property type="term" value="F:protein-exporting ATPase activity"/>
    <property type="evidence" value="ECO:0007669"/>
    <property type="project" value="UniProtKB-EC"/>
</dbReference>
<dbReference type="GO" id="GO:0065002">
    <property type="term" value="P:intracellular protein transmembrane transport"/>
    <property type="evidence" value="ECO:0007669"/>
    <property type="project" value="UniProtKB-UniRule"/>
</dbReference>
<dbReference type="GO" id="GO:0017038">
    <property type="term" value="P:protein import"/>
    <property type="evidence" value="ECO:0007669"/>
    <property type="project" value="InterPro"/>
</dbReference>
<dbReference type="GO" id="GO:0006605">
    <property type="term" value="P:protein targeting"/>
    <property type="evidence" value="ECO:0007669"/>
    <property type="project" value="UniProtKB-UniRule"/>
</dbReference>
<dbReference type="GO" id="GO:0043952">
    <property type="term" value="P:protein transport by the Sec complex"/>
    <property type="evidence" value="ECO:0007669"/>
    <property type="project" value="TreeGrafter"/>
</dbReference>
<dbReference type="CDD" id="cd17928">
    <property type="entry name" value="DEXDc_SecA"/>
    <property type="match status" value="1"/>
</dbReference>
<dbReference type="CDD" id="cd18803">
    <property type="entry name" value="SF2_C_secA"/>
    <property type="match status" value="1"/>
</dbReference>
<dbReference type="FunFam" id="3.40.50.300:FF:000113">
    <property type="entry name" value="Preprotein translocase subunit SecA"/>
    <property type="match status" value="1"/>
</dbReference>
<dbReference type="FunFam" id="3.90.1440.10:FF:000001">
    <property type="entry name" value="Preprotein translocase subunit SecA"/>
    <property type="match status" value="1"/>
</dbReference>
<dbReference type="FunFam" id="3.40.50.300:FF:000334">
    <property type="entry name" value="Protein translocase subunit SecA"/>
    <property type="match status" value="1"/>
</dbReference>
<dbReference type="Gene3D" id="1.10.3060.10">
    <property type="entry name" value="Helical scaffold and wing domains of SecA"/>
    <property type="match status" value="2"/>
</dbReference>
<dbReference type="Gene3D" id="3.40.50.300">
    <property type="entry name" value="P-loop containing nucleotide triphosphate hydrolases"/>
    <property type="match status" value="2"/>
</dbReference>
<dbReference type="Gene3D" id="3.90.1440.10">
    <property type="entry name" value="SecA, preprotein cross-linking domain"/>
    <property type="match status" value="1"/>
</dbReference>
<dbReference type="HAMAP" id="MF_01382">
    <property type="entry name" value="SecA"/>
    <property type="match status" value="1"/>
</dbReference>
<dbReference type="InterPro" id="IPR014001">
    <property type="entry name" value="Helicase_ATP-bd"/>
</dbReference>
<dbReference type="InterPro" id="IPR001650">
    <property type="entry name" value="Helicase_C-like"/>
</dbReference>
<dbReference type="InterPro" id="IPR027417">
    <property type="entry name" value="P-loop_NTPase"/>
</dbReference>
<dbReference type="InterPro" id="IPR000185">
    <property type="entry name" value="SecA"/>
</dbReference>
<dbReference type="InterPro" id="IPR020937">
    <property type="entry name" value="SecA_CS"/>
</dbReference>
<dbReference type="InterPro" id="IPR011115">
    <property type="entry name" value="SecA_DEAD"/>
</dbReference>
<dbReference type="InterPro" id="IPR014018">
    <property type="entry name" value="SecA_motor_DEAD"/>
</dbReference>
<dbReference type="InterPro" id="IPR011130">
    <property type="entry name" value="SecA_preprotein_X-link_dom"/>
</dbReference>
<dbReference type="InterPro" id="IPR044722">
    <property type="entry name" value="SecA_SF2_C"/>
</dbReference>
<dbReference type="InterPro" id="IPR011116">
    <property type="entry name" value="SecA_Wing/Scaffold"/>
</dbReference>
<dbReference type="InterPro" id="IPR036266">
    <property type="entry name" value="SecA_Wing/Scaffold_sf"/>
</dbReference>
<dbReference type="InterPro" id="IPR036670">
    <property type="entry name" value="SecA_X-link_sf"/>
</dbReference>
<dbReference type="NCBIfam" id="NF009538">
    <property type="entry name" value="PRK12904.1"/>
    <property type="match status" value="1"/>
</dbReference>
<dbReference type="NCBIfam" id="TIGR00963">
    <property type="entry name" value="secA"/>
    <property type="match status" value="1"/>
</dbReference>
<dbReference type="PANTHER" id="PTHR30612:SF0">
    <property type="entry name" value="CHLOROPLAST PROTEIN-TRANSPORTING ATPASE"/>
    <property type="match status" value="1"/>
</dbReference>
<dbReference type="PANTHER" id="PTHR30612">
    <property type="entry name" value="SECA INNER MEMBRANE COMPONENT OF SEC PROTEIN SECRETION SYSTEM"/>
    <property type="match status" value="1"/>
</dbReference>
<dbReference type="Pfam" id="PF21090">
    <property type="entry name" value="P-loop_SecA"/>
    <property type="match status" value="1"/>
</dbReference>
<dbReference type="Pfam" id="PF07517">
    <property type="entry name" value="SecA_DEAD"/>
    <property type="match status" value="1"/>
</dbReference>
<dbReference type="Pfam" id="PF01043">
    <property type="entry name" value="SecA_PP_bind"/>
    <property type="match status" value="1"/>
</dbReference>
<dbReference type="Pfam" id="PF07516">
    <property type="entry name" value="SecA_SW"/>
    <property type="match status" value="2"/>
</dbReference>
<dbReference type="PRINTS" id="PR00906">
    <property type="entry name" value="SECA"/>
</dbReference>
<dbReference type="SMART" id="SM00957">
    <property type="entry name" value="SecA_DEAD"/>
    <property type="match status" value="1"/>
</dbReference>
<dbReference type="SMART" id="SM00958">
    <property type="entry name" value="SecA_PP_bind"/>
    <property type="match status" value="1"/>
</dbReference>
<dbReference type="SUPFAM" id="SSF81886">
    <property type="entry name" value="Helical scaffold and wing domains of SecA"/>
    <property type="match status" value="2"/>
</dbReference>
<dbReference type="SUPFAM" id="SSF52540">
    <property type="entry name" value="P-loop containing nucleoside triphosphate hydrolases"/>
    <property type="match status" value="2"/>
</dbReference>
<dbReference type="SUPFAM" id="SSF81767">
    <property type="entry name" value="Pre-protein crosslinking domain of SecA"/>
    <property type="match status" value="1"/>
</dbReference>
<dbReference type="PROSITE" id="PS01312">
    <property type="entry name" value="SECA"/>
    <property type="match status" value="1"/>
</dbReference>
<dbReference type="PROSITE" id="PS51196">
    <property type="entry name" value="SECA_MOTOR_DEAD"/>
    <property type="match status" value="1"/>
</dbReference>
<reference key="1">
    <citation type="journal article" date="2007" name="Nat. Biotechnol.">
        <title>Complete genome sequence of the myxobacterium Sorangium cellulosum.</title>
        <authorList>
            <person name="Schneiker S."/>
            <person name="Perlova O."/>
            <person name="Kaiser O."/>
            <person name="Gerth K."/>
            <person name="Alici A."/>
            <person name="Altmeyer M.O."/>
            <person name="Bartels D."/>
            <person name="Bekel T."/>
            <person name="Beyer S."/>
            <person name="Bode E."/>
            <person name="Bode H.B."/>
            <person name="Bolten C.J."/>
            <person name="Choudhuri J.V."/>
            <person name="Doss S."/>
            <person name="Elnakady Y.A."/>
            <person name="Frank B."/>
            <person name="Gaigalat L."/>
            <person name="Goesmann A."/>
            <person name="Groeger C."/>
            <person name="Gross F."/>
            <person name="Jelsbak L."/>
            <person name="Jelsbak L."/>
            <person name="Kalinowski J."/>
            <person name="Kegler C."/>
            <person name="Knauber T."/>
            <person name="Konietzny S."/>
            <person name="Kopp M."/>
            <person name="Krause L."/>
            <person name="Krug D."/>
            <person name="Linke B."/>
            <person name="Mahmud T."/>
            <person name="Martinez-Arias R."/>
            <person name="McHardy A.C."/>
            <person name="Merai M."/>
            <person name="Meyer F."/>
            <person name="Mormann S."/>
            <person name="Munoz-Dorado J."/>
            <person name="Perez J."/>
            <person name="Pradella S."/>
            <person name="Rachid S."/>
            <person name="Raddatz G."/>
            <person name="Rosenau F."/>
            <person name="Rueckert C."/>
            <person name="Sasse F."/>
            <person name="Scharfe M."/>
            <person name="Schuster S.C."/>
            <person name="Suen G."/>
            <person name="Treuner-Lange A."/>
            <person name="Velicer G.J."/>
            <person name="Vorholter F.-J."/>
            <person name="Weissman K.J."/>
            <person name="Welch R.D."/>
            <person name="Wenzel S.C."/>
            <person name="Whitworth D.E."/>
            <person name="Wilhelm S."/>
            <person name="Wittmann C."/>
            <person name="Bloecker H."/>
            <person name="Puehler A."/>
            <person name="Mueller R."/>
        </authorList>
    </citation>
    <scope>NUCLEOTIDE SEQUENCE [LARGE SCALE GENOMIC DNA]</scope>
    <source>
        <strain>So ce56</strain>
    </source>
</reference>
<name>SECA_SORC5</name>
<keyword id="KW-0067">ATP-binding</keyword>
<keyword id="KW-0997">Cell inner membrane</keyword>
<keyword id="KW-1003">Cell membrane</keyword>
<keyword id="KW-0963">Cytoplasm</keyword>
<keyword id="KW-0472">Membrane</keyword>
<keyword id="KW-0479">Metal-binding</keyword>
<keyword id="KW-0547">Nucleotide-binding</keyword>
<keyword id="KW-0653">Protein transport</keyword>
<keyword id="KW-1185">Reference proteome</keyword>
<keyword id="KW-1278">Translocase</keyword>
<keyword id="KW-0811">Translocation</keyword>
<keyword id="KW-0813">Transport</keyword>
<keyword id="KW-0862">Zinc</keyword>